<feature type="peptide" id="PRO_0000440942" description="Conorfamide Tx1.3" evidence="1">
    <location>
        <begin position="1"/>
        <end position="8"/>
    </location>
</feature>
<feature type="peptide" id="PRO_0000440943" description="CNF-Tx1.2" evidence="1">
    <location>
        <begin position="3"/>
        <end position="8"/>
    </location>
</feature>
<feature type="peptide" id="PRO_0000440944" description="CNF-Tx1.1" evidence="1">
    <location>
        <begin position="5"/>
        <end position="8"/>
    </location>
</feature>
<feature type="modified residue" description="Phenylalanine amide" evidence="1">
    <location>
        <position position="8"/>
    </location>
</feature>
<sequence>AIVGRPRF</sequence>
<comment type="function">
    <molecule>CNF-Tx1.1</molecule>
    <text evidence="1">Potentiates ASIC3 currents (homotrimer and ASIC1a-ASIC3, ASIC1b-ASIC3, ASIC2a-ASIC3 and ASIC2b-ASIC3 heterotrimers) (PubMed:28396446). It increases the peak current amplitude of ASIC3 homotrimer by 1.48-fold (PubMed:28396446). In addition, it slows the desensitization kinetics of ASIC3 (homotrimer and heterotrimer-containing ASIC3) (PubMed:28396446). The current amplitude at the end of a 10-second proton pulse of ASIC3 homotrimer is 26% instead of 1% without the peptide (PubMed:28396446). It strongly acts by binding to the channel in the closed state (PubMed:28396446). It shows a higher affinity for ASIC3 homotrimers than does CNF-Tx1.2 (PubMed:28396446). It changes the apparent proton affinity of ASIC3 (to higher pH for potentiation and to lower pH for desensitization) (PubMed:28396446). It competes with FMRFamide (AC P69145) for a common binding site (PubMed:28396446). In vivo, intramuscular injection into mice enhances acid-induced muscle pain (PubMed:28396446).</text>
</comment>
<comment type="function">
    <molecule>CNF-Tx1.2</molecule>
    <text evidence="1 3">Potentiates ASIC3 (homotrimer) currents (PubMed:28396446) and heterotrimer-containing ASIC3 (Probable). It increases the peak current amplitude of ASIC3 homotrimer by 1.2-fold (PubMed:28396446). In addition, it slows the desensitization kinetics of ASIC3 (the current amplitude at the end of a 10-second proton pulse is 40% instead of 1% without the peptide) (PubMed:28396446). It shows a lower affinity for ASIC3 than CNF-Tx1.1 (PubMed:28396446). In vivo, intramuscular injection into mice enhances acid-induced muscle pain (Probable).</text>
</comment>
<comment type="function">
    <text evidence="1 3">CNF-Tx1.3: Potentiates ASIC3 (homotrimer) currents (PubMed:28396446) and heterotrimer-containing ASIC3 (Probable). Is less potent than CNF-Tx1.1 and CNF-Tx1.2 (PubMed:28396446). In addition, it slows the desensitization kinetics of ASIC3 (Probable). In vivo, intramuscular injection into mice enhances acid-induced muscle pain (Probable).</text>
</comment>
<comment type="subcellular location">
    <subcellularLocation>
        <location evidence="1">Secreted</location>
    </subcellularLocation>
</comment>
<comment type="tissue specificity">
    <text evidence="4">Expressed by the venom duct.</text>
</comment>
<comment type="PTM">
    <text evidence="1">The amidation of Phe-8 is essential for rat ASIC3 current potentiation. A synthetic peptide with Phe-8 not amidated does not potentiate ASIC3 current.</text>
</comment>
<comment type="similarity">
    <text evidence="4">Belongs to the NPY family.</text>
</comment>
<dbReference type="GO" id="GO:0005576">
    <property type="term" value="C:extracellular region"/>
    <property type="evidence" value="ECO:0007669"/>
    <property type="project" value="UniProtKB-SubCell"/>
</dbReference>
<dbReference type="GO" id="GO:0099106">
    <property type="term" value="F:ion channel regulator activity"/>
    <property type="evidence" value="ECO:0007669"/>
    <property type="project" value="UniProtKB-KW"/>
</dbReference>
<dbReference type="GO" id="GO:0090729">
    <property type="term" value="F:toxin activity"/>
    <property type="evidence" value="ECO:0007669"/>
    <property type="project" value="UniProtKB-KW"/>
</dbReference>
<evidence type="ECO:0000269" key="1">
    <source>
    </source>
</evidence>
<evidence type="ECO:0000303" key="2">
    <source>
    </source>
</evidence>
<evidence type="ECO:0000305" key="3"/>
<evidence type="ECO:0000305" key="4">
    <source>
    </source>
</evidence>
<reference key="1">
    <citation type="journal article" date="2017" name="Proc. Natl. Acad. Sci. U.S.A.">
        <title>Identification of a cono-RFamide from the venom of Conus textile that targets ASIC3 and enhances muscle pain.</title>
        <authorList>
            <person name="Reimers C."/>
            <person name="Lee C.H."/>
            <person name="Kalbacher H."/>
            <person name="Tian Y."/>
            <person name="Hung C.H."/>
            <person name="Schmidt A."/>
            <person name="Prokop L."/>
            <person name="Kauferstein S."/>
            <person name="Mebs D."/>
            <person name="Chen C.C."/>
            <person name="Gruender S."/>
        </authorList>
    </citation>
    <scope>PROTEIN SEQUENCE</scope>
    <scope>FUNCTION</scope>
    <scope>BIOASSAY</scope>
    <scope>AMIDATION AT PHE-8</scope>
    <scope>SUBCELLULAR LOCATION</scope>
    <scope>SYNTHESIS</scope>
    <source>
        <tissue>Venom</tissue>
    </source>
</reference>
<name>COS_CONTE</name>
<keyword id="KW-0027">Amidation</keyword>
<keyword id="KW-0903">Direct protein sequencing</keyword>
<keyword id="KW-0872">Ion channel impairing toxin</keyword>
<keyword id="KW-1275">Proton-gated sodium channel impairing toxin</keyword>
<keyword id="KW-0964">Secreted</keyword>
<keyword id="KW-0800">Toxin</keyword>
<organism>
    <name type="scientific">Conus textile</name>
    <name type="common">Cloth-of-gold cone</name>
    <dbReference type="NCBI Taxonomy" id="6494"/>
    <lineage>
        <taxon>Eukaryota</taxon>
        <taxon>Metazoa</taxon>
        <taxon>Spiralia</taxon>
        <taxon>Lophotrochozoa</taxon>
        <taxon>Mollusca</taxon>
        <taxon>Gastropoda</taxon>
        <taxon>Caenogastropoda</taxon>
        <taxon>Neogastropoda</taxon>
        <taxon>Conoidea</taxon>
        <taxon>Conidae</taxon>
        <taxon>Conus</taxon>
        <taxon>Cylinder</taxon>
    </lineage>
</organism>
<protein>
    <recommendedName>
        <fullName evidence="3">Conorfamide Tx1.3</fullName>
    </recommendedName>
    <alternativeName>
        <fullName evidence="2">AIVGRPRFamide</fullName>
        <shortName evidence="2">AIVGRPRFa</shortName>
    </alternativeName>
    <alternativeName>
        <fullName evidence="2">Cono-RFamide CNF-Tx1.3</fullName>
    </alternativeName>
    <component>
        <recommendedName>
            <fullName evidence="2">CNF-Tx1.2</fullName>
        </recommendedName>
        <alternativeName>
            <fullName evidence="2">VGRPRFamide</fullName>
            <shortName evidence="2">VGRPRFa</shortName>
        </alternativeName>
    </component>
    <component>
        <recommendedName>
            <fullName evidence="2">CNF-Tx1.1</fullName>
        </recommendedName>
        <alternativeName>
            <fullName evidence="2">RPRFamide</fullName>
            <shortName evidence="2">RPRFa</shortName>
        </alternativeName>
    </component>
</protein>
<proteinExistence type="evidence at protein level"/>
<accession>P0DL71</accession>